<proteinExistence type="evidence at protein level"/>
<evidence type="ECO:0000250" key="1"/>
<evidence type="ECO:0000250" key="2">
    <source>
        <dbReference type="UniProtKB" id="Q02909"/>
    </source>
</evidence>
<evidence type="ECO:0000269" key="3">
    <source>
    </source>
</evidence>
<evidence type="ECO:0000305" key="4"/>
<evidence type="ECO:0000312" key="5">
    <source>
        <dbReference type="EMBL" id="AAS01722.1"/>
    </source>
</evidence>
<organism>
    <name type="scientific">Chlamydomonas reinhardtii</name>
    <name type="common">Chlamydomonas smithii</name>
    <dbReference type="NCBI Taxonomy" id="3055"/>
    <lineage>
        <taxon>Eukaryota</taxon>
        <taxon>Viridiplantae</taxon>
        <taxon>Chlorophyta</taxon>
        <taxon>core chlorophytes</taxon>
        <taxon>Chlorophyceae</taxon>
        <taxon>CS clade</taxon>
        <taxon>Chlamydomonadales</taxon>
        <taxon>Chlamydomonadaceae</taxon>
        <taxon>Chlamydomonas</taxon>
    </lineage>
</organism>
<keyword id="KW-0021">Allosteric enzyme</keyword>
<keyword id="KW-0120">Carbon dioxide fixation</keyword>
<keyword id="KW-0963">Cytoplasm</keyword>
<keyword id="KW-0903">Direct protein sequencing</keyword>
<keyword id="KW-0456">Lyase</keyword>
<keyword id="KW-0460">Magnesium</keyword>
<keyword id="KW-0670">Pyruvate</keyword>
<feature type="chain" id="PRO_0000166661" description="Phosphoenolpyruvate carboxylase 1">
    <location>
        <begin position="1"/>
        <end position="974"/>
    </location>
</feature>
<feature type="active site" evidence="2">
    <location>
        <position position="164"/>
    </location>
</feature>
<feature type="active site" evidence="2">
    <location>
        <position position="604"/>
    </location>
</feature>
<feature type="sequence conflict" description="In Ref. 2; AA sequence." evidence="4" ref="2">
    <original>GLR</original>
    <variation>DLL</variation>
    <location>
        <begin position="28"/>
        <end position="30"/>
    </location>
</feature>
<comment type="function">
    <text evidence="2">Through the carboxylation of phosphoenolpyruvate (PEP) it forms oxaloacetate, a four-carbon dicarboxylic acid source for the tricarboxylic acid cycle.</text>
</comment>
<comment type="catalytic activity">
    <reaction>
        <text>oxaloacetate + phosphate = phosphoenolpyruvate + hydrogencarbonate</text>
        <dbReference type="Rhea" id="RHEA:28370"/>
        <dbReference type="ChEBI" id="CHEBI:16452"/>
        <dbReference type="ChEBI" id="CHEBI:17544"/>
        <dbReference type="ChEBI" id="CHEBI:43474"/>
        <dbReference type="ChEBI" id="CHEBI:58702"/>
        <dbReference type="EC" id="4.1.1.31"/>
    </reaction>
</comment>
<comment type="cofactor">
    <cofactor evidence="1">
        <name>Mg(2+)</name>
        <dbReference type="ChEBI" id="CHEBI:18420"/>
    </cofactor>
</comment>
<comment type="activity regulation">
    <text evidence="3">Activated by glutamine and dihydroxyacetone phosphate. Inhibited by glutamate, aspartate, 2-oxoglutarate and malate.</text>
</comment>
<comment type="biophysicochemical properties">
    <phDependence>
        <text>Optimum pH is 8.1.</text>
    </phDependence>
</comment>
<comment type="subunit">
    <text evidence="3 4">Exists as a homotetramer or heterooligomer.</text>
</comment>
<comment type="subcellular location">
    <subcellularLocation>
        <location evidence="1">Cytoplasm</location>
    </subcellularLocation>
</comment>
<comment type="similarity">
    <text evidence="4">Belongs to the PEPCase type 1 family.</text>
</comment>
<protein>
    <recommendedName>
        <fullName>Phosphoenolpyruvate carboxylase 1</fullName>
        <shortName>PEP carboxylase 1</shortName>
        <shortName>PEPC 1</shortName>
        <shortName>PEPCase 1</shortName>
        <ecNumber>4.1.1.31</ecNumber>
    </recommendedName>
</protein>
<sequence length="974" mass="108907">MQLSATSGRTSFRVSQDLRTGPANFLSGLRDDDSLLRQVFFSILRHHHPNLAAKVDVIYALSQAWCTSQSDNDFELMVKYVSDLKPEERILVASSFSHMLNLHNLTEEVNSSQIGRAVRLGEMDSPTRDTNHSLLKLTTTNGFTPQQVYDTLCSQTVELVLTAHPTQALRASLLKKYAIVRRELDTLHSKRMSEYEKIETLEAIRAAVQAAWRTDEIRRSKPTPQDEMRSGLSYFSTVIFDVVPVFHRRVDTALEKLGLPRLPLDRALFKFGSWMGGDRDGNPNVTAETTRDVVVLARLEAVNVYFRQVEGLMFDLSIWRCSPEMKELAERLAAAESRDAARVAEERKRRNYVDFWAPIPPTEPFRVVLAHMRDRLYNTRQVLHQCLIHTHMSVRGALEEAGAYVDIEDMARPLKLMYDSLMSTGDESVANARLLDLLRQIRTFGLCMMGLDVRQESTRHTEVMDAVTTYLGLGSYASWDEPKRLAFLLGELQGKRPLMPPGMDMSPEVKEVVRTLRILSELPGDSLGAYIISMAKTASDVLAVVLLQRETGVRPALRVVPLFETLDDLHNAPGTMTTLLGNDWYRGHINGVQECMIGYSDSGKDAGRLAAAWALYETQEKLVEVAAGCGVRLVLFHGRGGTVGRGGGPTHMAIRSQPSGTINGHLRVTVQGEIIEQQFGEKEVCFRTLDLYTSAVLEAALDPPPAPAQEWRDLMSLLATESCDMYRSVVYRTPEFYDYFMQSTAASELGRLNIGSRPSSRKSGGIETLRAIPWIFAWTQQRLHLPVWLGIGEALEAAIDKGYGPVLQDMYANWPFFTSTLDLVEMVLAKADSRLSAFYERTLVDSSLAPLGQRLRELLAKTQQNILIVVRKSVLLEGNTPSQMSTPNLDEKIRLRSPYVAPLNVLQALSLQGLRKFRDGGDTEYNPSDPEIIDLLSRDPHKKGEGAQHPFVSAMDDCLMITIKGIAAGMQNTG</sequence>
<name>CAPP1_CHLRE</name>
<accession>P81831</accession>
<accession>Q6R2V5</accession>
<dbReference type="EC" id="4.1.1.31"/>
<dbReference type="EMBL" id="AY517644">
    <property type="protein sequence ID" value="AAS01722.1"/>
    <property type="molecule type" value="mRNA"/>
</dbReference>
<dbReference type="SMR" id="P81831"/>
<dbReference type="PaxDb" id="3055-EDP01154"/>
<dbReference type="EnsemblPlants" id="PNW72303">
    <property type="protein sequence ID" value="PNW72303"/>
    <property type="gene ID" value="CHLRE_16g673852v5"/>
</dbReference>
<dbReference type="Gramene" id="PNW72303">
    <property type="protein sequence ID" value="PNW72303"/>
    <property type="gene ID" value="CHLRE_16g673852v5"/>
</dbReference>
<dbReference type="eggNOG" id="ENOG502QPVS">
    <property type="taxonomic scope" value="Eukaryota"/>
</dbReference>
<dbReference type="OrthoDB" id="1365747at2759"/>
<dbReference type="BRENDA" id="4.1.1.31">
    <property type="organism ID" value="1318"/>
</dbReference>
<dbReference type="GO" id="GO:0005737">
    <property type="term" value="C:cytoplasm"/>
    <property type="evidence" value="ECO:0007669"/>
    <property type="project" value="UniProtKB-SubCell"/>
</dbReference>
<dbReference type="GO" id="GO:0008964">
    <property type="term" value="F:phosphoenolpyruvate carboxylase activity"/>
    <property type="evidence" value="ECO:0007669"/>
    <property type="project" value="UniProtKB-EC"/>
</dbReference>
<dbReference type="GO" id="GO:0015977">
    <property type="term" value="P:carbon fixation"/>
    <property type="evidence" value="ECO:0007669"/>
    <property type="project" value="UniProtKB-KW"/>
</dbReference>
<dbReference type="GO" id="GO:0006099">
    <property type="term" value="P:tricarboxylic acid cycle"/>
    <property type="evidence" value="ECO:0007669"/>
    <property type="project" value="InterPro"/>
</dbReference>
<dbReference type="FunFam" id="1.20.1440.90:FF:000001">
    <property type="entry name" value="Phosphoenolpyruvate carboxylase 1"/>
    <property type="match status" value="1"/>
</dbReference>
<dbReference type="Gene3D" id="1.20.1440.90">
    <property type="entry name" value="Phosphoenolpyruvate/pyruvate domain"/>
    <property type="match status" value="1"/>
</dbReference>
<dbReference type="HAMAP" id="MF_00595">
    <property type="entry name" value="PEPcase_type1"/>
    <property type="match status" value="1"/>
</dbReference>
<dbReference type="InterPro" id="IPR021135">
    <property type="entry name" value="PEP_COase"/>
</dbReference>
<dbReference type="InterPro" id="IPR022805">
    <property type="entry name" value="PEP_COase_bac/pln-type"/>
</dbReference>
<dbReference type="InterPro" id="IPR018129">
    <property type="entry name" value="PEP_COase_Lys_AS"/>
</dbReference>
<dbReference type="InterPro" id="IPR033129">
    <property type="entry name" value="PEPCASE_His_AS"/>
</dbReference>
<dbReference type="InterPro" id="IPR015813">
    <property type="entry name" value="Pyrv/PenolPyrv_kinase-like_dom"/>
</dbReference>
<dbReference type="NCBIfam" id="NF000584">
    <property type="entry name" value="PRK00009.1"/>
    <property type="match status" value="1"/>
</dbReference>
<dbReference type="PANTHER" id="PTHR30523">
    <property type="entry name" value="PHOSPHOENOLPYRUVATE CARBOXYLASE"/>
    <property type="match status" value="1"/>
</dbReference>
<dbReference type="PANTHER" id="PTHR30523:SF33">
    <property type="entry name" value="PHOSPHOENOLPYRUVATE CARBOXYLASE 3"/>
    <property type="match status" value="1"/>
</dbReference>
<dbReference type="Pfam" id="PF00311">
    <property type="entry name" value="PEPcase"/>
    <property type="match status" value="1"/>
</dbReference>
<dbReference type="PRINTS" id="PR00150">
    <property type="entry name" value="PEPCARBXLASE"/>
</dbReference>
<dbReference type="SUPFAM" id="SSF51621">
    <property type="entry name" value="Phosphoenolpyruvate/pyruvate domain"/>
    <property type="match status" value="1"/>
</dbReference>
<dbReference type="PROSITE" id="PS00781">
    <property type="entry name" value="PEPCASE_1"/>
    <property type="match status" value="1"/>
</dbReference>
<dbReference type="PROSITE" id="PS00393">
    <property type="entry name" value="PEPCASE_2"/>
    <property type="match status" value="1"/>
</dbReference>
<gene>
    <name evidence="5" type="primary">Ppc1</name>
</gene>
<reference key="1">
    <citation type="journal article" date="2005" name="Plant J.">
        <title>Identification and expression analysis of two inorganic C- and N-responsive genes encoding novel and distinct molecular forms of eukaryotic phosphoenolpyruvate carboxylase in the green microalga Chlamydomonas reinhardtii.</title>
        <authorList>
            <person name="Mamedov T.G."/>
            <person name="Moellering E.R."/>
            <person name="Chollet R."/>
        </authorList>
    </citation>
    <scope>NUCLEOTIDE SEQUENCE [MRNA]</scope>
    <source>
        <strain>137c / CC-125</strain>
    </source>
</reference>
<reference evidence="4" key="2">
    <citation type="journal article" date="1998" name="Biochem. J.">
        <title>Purification and characterization of high- and low-molecular-mass isoforms of phosphoenolpyruvate carboxylase from Chlamydomonas reinhardtii. Kinetic, structural and immunological evidence that the green algal enzyme is distinct from the prokaryotic and higher plant enzymes.</title>
        <authorList>
            <person name="Rivoal J."/>
            <person name="Plaxton W.C."/>
            <person name="Turpin D.H."/>
        </authorList>
    </citation>
    <scope>PROTEIN SEQUENCE OF 16-30</scope>
    <scope>ACTIVITY REGULATION</scope>
    <scope>SUBUNIT</scope>
    <source>
        <strain evidence="3">cw15</strain>
    </source>
</reference>